<sequence length="540" mass="61492">MALQSTILHMARKNLLQESCRQLLIQTHGLHKSVASGSLEIAAHSQADLKEESAVSPAEEVQKAARVKSLKEMPGPSTVANLLEFFYRDGFSRIHEIQMEHAKKYGKIFKSRFGPQFVVSIADRDMVAQVLRSESATPQRGNMESWKEYRDLRGRSTGLISAEGDEWLKMRSVLRQLIMRPRDVAVFSSDVNDVVADLVKRVKTLRSQQDDSQTVLNINDLFFKYAMEGVATILYETRLGCLENEIPKMSQEYITALHLMFSSFKTTMYAGAIPKWLRPIIPKPWEEFCSSWDGLFKFSQIHVDKRLSEIKKQMEKSEEIKGGLLTHMLVTREMNLEEIYANMTEMLLAGVDTTSFTLSWSTYLLARHPTIQQQIFEEVDRVLGGRVPTGEDVPYLPLIRGLVKETLRLFPVLPGNGRVTHDDLIVGGYLIPKGTQLALCHYSTSMDEENFPRPEEFRPDRWIRKDASDRVDNFGSIPFGYGIRSCIGRRIAELEMHLALTQLLQNFHIEVSPQTTEVHAKTHGLLCPGASINLRFTDRK</sequence>
<evidence type="ECO:0000250" key="1">
    <source>
        <dbReference type="UniProtKB" id="P04798"/>
    </source>
</evidence>
<evidence type="ECO:0000250" key="2">
    <source>
        <dbReference type="UniProtKB" id="Q4G0S4"/>
    </source>
</evidence>
<evidence type="ECO:0000269" key="3">
    <source>
    </source>
</evidence>
<evidence type="ECO:0000305" key="4"/>
<gene>
    <name type="primary">cyp27c1</name>
</gene>
<protein>
    <recommendedName>
        <fullName>Cytochrome P450 27C1</fullName>
        <ecNumber evidence="3">1.14.19.53</ecNumber>
    </recommendedName>
    <alternativeName>
        <fullName evidence="2">All-trans retinol 3,4-desaturase</fullName>
    </alternativeName>
</protein>
<accession>A8WGA0</accession>
<accession>F1QMI2</accession>
<proteinExistence type="evidence at protein level"/>
<keyword id="KW-0349">Heme</keyword>
<keyword id="KW-0408">Iron</keyword>
<keyword id="KW-0443">Lipid metabolism</keyword>
<keyword id="KW-0472">Membrane</keyword>
<keyword id="KW-0479">Metal-binding</keyword>
<keyword id="KW-0503">Monooxygenase</keyword>
<keyword id="KW-0560">Oxidoreductase</keyword>
<keyword id="KW-1185">Reference proteome</keyword>
<dbReference type="EC" id="1.14.19.53" evidence="3"/>
<dbReference type="EMBL" id="BX927387">
    <property type="status" value="NOT_ANNOTATED_CDS"/>
    <property type="molecule type" value="Genomic_DNA"/>
</dbReference>
<dbReference type="EMBL" id="BC154632">
    <property type="protein sequence ID" value="AAI54633.1"/>
    <property type="status" value="ALT_INIT"/>
    <property type="molecule type" value="mRNA"/>
</dbReference>
<dbReference type="EMBL" id="BC171576">
    <property type="protein sequence ID" value="AAI71576.1"/>
    <property type="status" value="ALT_INIT"/>
    <property type="molecule type" value="mRNA"/>
</dbReference>
<dbReference type="EMBL" id="BC171578">
    <property type="protein sequence ID" value="AAI71578.1"/>
    <property type="status" value="ALT_INIT"/>
    <property type="molecule type" value="mRNA"/>
</dbReference>
<dbReference type="RefSeq" id="NP_001106808.2">
    <property type="nucleotide sequence ID" value="NM_001113337.3"/>
</dbReference>
<dbReference type="SMR" id="A8WGA0"/>
<dbReference type="FunCoup" id="A8WGA0">
    <property type="interactions" value="248"/>
</dbReference>
<dbReference type="STRING" id="7955.ENSDARP00000118349"/>
<dbReference type="PaxDb" id="7955-ENSDARP00000118349"/>
<dbReference type="PeptideAtlas" id="A8WGA0"/>
<dbReference type="Ensembl" id="ENSDART00000144335">
    <property type="protein sequence ID" value="ENSDARP00000118349"/>
    <property type="gene ID" value="ENSDARG00000092660"/>
</dbReference>
<dbReference type="GeneID" id="558396"/>
<dbReference type="KEGG" id="dre:558396"/>
<dbReference type="AGR" id="ZFIN:ZDB-GENE-080204-68"/>
<dbReference type="CTD" id="339761"/>
<dbReference type="ZFIN" id="ZDB-GENE-080204-68">
    <property type="gene designation" value="cyp27c1"/>
</dbReference>
<dbReference type="eggNOG" id="KOG0159">
    <property type="taxonomic scope" value="Eukaryota"/>
</dbReference>
<dbReference type="InParanoid" id="A8WGA0"/>
<dbReference type="OMA" id="EIHLVMI"/>
<dbReference type="OrthoDB" id="3945418at2759"/>
<dbReference type="PhylomeDB" id="A8WGA0"/>
<dbReference type="TreeFam" id="TF105094"/>
<dbReference type="BRENDA" id="1.14.19.53">
    <property type="organism ID" value="928"/>
</dbReference>
<dbReference type="PRO" id="PR:A8WGA0"/>
<dbReference type="Proteomes" id="UP000000437">
    <property type="component" value="Chromosome 6"/>
</dbReference>
<dbReference type="Bgee" id="ENSDARG00000092660">
    <property type="expression patterns" value="Expressed in gastrula and 20 other cell types or tissues"/>
</dbReference>
<dbReference type="GO" id="GO:0016020">
    <property type="term" value="C:membrane"/>
    <property type="evidence" value="ECO:0007669"/>
    <property type="project" value="UniProtKB-SubCell"/>
</dbReference>
<dbReference type="GO" id="GO:0005739">
    <property type="term" value="C:mitochondrion"/>
    <property type="evidence" value="ECO:0000318"/>
    <property type="project" value="GO_Central"/>
</dbReference>
<dbReference type="GO" id="GO:0061897">
    <property type="term" value="F:all-trans retinal 3,4-desaturase activity"/>
    <property type="evidence" value="ECO:0000318"/>
    <property type="project" value="GO_Central"/>
</dbReference>
<dbReference type="GO" id="GO:0061898">
    <property type="term" value="F:all-trans retinoic acid 3,4-desaturase activity"/>
    <property type="evidence" value="ECO:0000318"/>
    <property type="project" value="GO_Central"/>
</dbReference>
<dbReference type="GO" id="GO:0061896">
    <property type="term" value="F:all-trans retinol 3,4-desaturase activity"/>
    <property type="evidence" value="ECO:0000318"/>
    <property type="project" value="GO_Central"/>
</dbReference>
<dbReference type="GO" id="GO:1904768">
    <property type="term" value="F:all-trans-retinol binding"/>
    <property type="evidence" value="ECO:0000318"/>
    <property type="project" value="GO_Central"/>
</dbReference>
<dbReference type="GO" id="GO:0020037">
    <property type="term" value="F:heme binding"/>
    <property type="evidence" value="ECO:0007669"/>
    <property type="project" value="InterPro"/>
</dbReference>
<dbReference type="GO" id="GO:0005506">
    <property type="term" value="F:iron ion binding"/>
    <property type="evidence" value="ECO:0007669"/>
    <property type="project" value="InterPro"/>
</dbReference>
<dbReference type="GO" id="GO:0004497">
    <property type="term" value="F:monooxygenase activity"/>
    <property type="evidence" value="ECO:0007669"/>
    <property type="project" value="UniProtKB-KW"/>
</dbReference>
<dbReference type="GO" id="GO:0001972">
    <property type="term" value="F:retinoic acid binding"/>
    <property type="evidence" value="ECO:0000318"/>
    <property type="project" value="GO_Central"/>
</dbReference>
<dbReference type="GO" id="GO:0006629">
    <property type="term" value="P:lipid metabolic process"/>
    <property type="evidence" value="ECO:0007669"/>
    <property type="project" value="UniProtKB-KW"/>
</dbReference>
<dbReference type="FunFam" id="1.10.630.10:FF:000073">
    <property type="entry name" value="Cytochrome P450 family 27 subfamily C member 1"/>
    <property type="match status" value="1"/>
</dbReference>
<dbReference type="Gene3D" id="1.10.630.10">
    <property type="entry name" value="Cytochrome P450"/>
    <property type="match status" value="1"/>
</dbReference>
<dbReference type="InterPro" id="IPR050479">
    <property type="entry name" value="CYP11_CYP27_families"/>
</dbReference>
<dbReference type="InterPro" id="IPR001128">
    <property type="entry name" value="Cyt_P450"/>
</dbReference>
<dbReference type="InterPro" id="IPR017972">
    <property type="entry name" value="Cyt_P450_CS"/>
</dbReference>
<dbReference type="InterPro" id="IPR002401">
    <property type="entry name" value="Cyt_P450_E_grp-I"/>
</dbReference>
<dbReference type="InterPro" id="IPR036396">
    <property type="entry name" value="Cyt_P450_sf"/>
</dbReference>
<dbReference type="PANTHER" id="PTHR24279">
    <property type="entry name" value="CYTOCHROME P450"/>
    <property type="match status" value="1"/>
</dbReference>
<dbReference type="PANTHER" id="PTHR24279:SF122">
    <property type="entry name" value="CYTOCHROME P450 FAMILY 27 SUBFAMILY C MEMBER 1"/>
    <property type="match status" value="1"/>
</dbReference>
<dbReference type="Pfam" id="PF00067">
    <property type="entry name" value="p450"/>
    <property type="match status" value="1"/>
</dbReference>
<dbReference type="PRINTS" id="PR00463">
    <property type="entry name" value="EP450I"/>
</dbReference>
<dbReference type="PRINTS" id="PR00385">
    <property type="entry name" value="P450"/>
</dbReference>
<dbReference type="SUPFAM" id="SSF48264">
    <property type="entry name" value="Cytochrome P450"/>
    <property type="match status" value="1"/>
</dbReference>
<dbReference type="PROSITE" id="PS00086">
    <property type="entry name" value="CYTOCHROME_P450"/>
    <property type="match status" value="1"/>
</dbReference>
<feature type="chain" id="PRO_0000438858" description="Cytochrome P450 27C1">
    <location>
        <begin position="1"/>
        <end position="540"/>
    </location>
</feature>
<feature type="binding site" description="axial binding residue" evidence="1">
    <location>
        <position position="486"/>
    </location>
    <ligand>
        <name>heme</name>
        <dbReference type="ChEBI" id="CHEBI:30413"/>
    </ligand>
    <ligandPart>
        <name>Fe</name>
        <dbReference type="ChEBI" id="CHEBI:18248"/>
    </ligandPart>
</feature>
<reference key="1">
    <citation type="journal article" date="2013" name="Nature">
        <title>The zebrafish reference genome sequence and its relationship to the human genome.</title>
        <authorList>
            <person name="Howe K."/>
            <person name="Clark M.D."/>
            <person name="Torroja C.F."/>
            <person name="Torrance J."/>
            <person name="Berthelot C."/>
            <person name="Muffato M."/>
            <person name="Collins J.E."/>
            <person name="Humphray S."/>
            <person name="McLaren K."/>
            <person name="Matthews L."/>
            <person name="McLaren S."/>
            <person name="Sealy I."/>
            <person name="Caccamo M."/>
            <person name="Churcher C."/>
            <person name="Scott C."/>
            <person name="Barrett J.C."/>
            <person name="Koch R."/>
            <person name="Rauch G.J."/>
            <person name="White S."/>
            <person name="Chow W."/>
            <person name="Kilian B."/>
            <person name="Quintais L.T."/>
            <person name="Guerra-Assuncao J.A."/>
            <person name="Zhou Y."/>
            <person name="Gu Y."/>
            <person name="Yen J."/>
            <person name="Vogel J.H."/>
            <person name="Eyre T."/>
            <person name="Redmond S."/>
            <person name="Banerjee R."/>
            <person name="Chi J."/>
            <person name="Fu B."/>
            <person name="Langley E."/>
            <person name="Maguire S.F."/>
            <person name="Laird G.K."/>
            <person name="Lloyd D."/>
            <person name="Kenyon E."/>
            <person name="Donaldson S."/>
            <person name="Sehra H."/>
            <person name="Almeida-King J."/>
            <person name="Loveland J."/>
            <person name="Trevanion S."/>
            <person name="Jones M."/>
            <person name="Quail M."/>
            <person name="Willey D."/>
            <person name="Hunt A."/>
            <person name="Burton J."/>
            <person name="Sims S."/>
            <person name="McLay K."/>
            <person name="Plumb B."/>
            <person name="Davis J."/>
            <person name="Clee C."/>
            <person name="Oliver K."/>
            <person name="Clark R."/>
            <person name="Riddle C."/>
            <person name="Elliot D."/>
            <person name="Threadgold G."/>
            <person name="Harden G."/>
            <person name="Ware D."/>
            <person name="Begum S."/>
            <person name="Mortimore B."/>
            <person name="Kerry G."/>
            <person name="Heath P."/>
            <person name="Phillimore B."/>
            <person name="Tracey A."/>
            <person name="Corby N."/>
            <person name="Dunn M."/>
            <person name="Johnson C."/>
            <person name="Wood J."/>
            <person name="Clark S."/>
            <person name="Pelan S."/>
            <person name="Griffiths G."/>
            <person name="Smith M."/>
            <person name="Glithero R."/>
            <person name="Howden P."/>
            <person name="Barker N."/>
            <person name="Lloyd C."/>
            <person name="Stevens C."/>
            <person name="Harley J."/>
            <person name="Holt K."/>
            <person name="Panagiotidis G."/>
            <person name="Lovell J."/>
            <person name="Beasley H."/>
            <person name="Henderson C."/>
            <person name="Gordon D."/>
            <person name="Auger K."/>
            <person name="Wright D."/>
            <person name="Collins J."/>
            <person name="Raisen C."/>
            <person name="Dyer L."/>
            <person name="Leung K."/>
            <person name="Robertson L."/>
            <person name="Ambridge K."/>
            <person name="Leongamornlert D."/>
            <person name="McGuire S."/>
            <person name="Gilderthorp R."/>
            <person name="Griffiths C."/>
            <person name="Manthravadi D."/>
            <person name="Nichol S."/>
            <person name="Barker G."/>
            <person name="Whitehead S."/>
            <person name="Kay M."/>
            <person name="Brown J."/>
            <person name="Murnane C."/>
            <person name="Gray E."/>
            <person name="Humphries M."/>
            <person name="Sycamore N."/>
            <person name="Barker D."/>
            <person name="Saunders D."/>
            <person name="Wallis J."/>
            <person name="Babbage A."/>
            <person name="Hammond S."/>
            <person name="Mashreghi-Mohammadi M."/>
            <person name="Barr L."/>
            <person name="Martin S."/>
            <person name="Wray P."/>
            <person name="Ellington A."/>
            <person name="Matthews N."/>
            <person name="Ellwood M."/>
            <person name="Woodmansey R."/>
            <person name="Clark G."/>
            <person name="Cooper J."/>
            <person name="Tromans A."/>
            <person name="Grafham D."/>
            <person name="Skuce C."/>
            <person name="Pandian R."/>
            <person name="Andrews R."/>
            <person name="Harrison E."/>
            <person name="Kimberley A."/>
            <person name="Garnett J."/>
            <person name="Fosker N."/>
            <person name="Hall R."/>
            <person name="Garner P."/>
            <person name="Kelly D."/>
            <person name="Bird C."/>
            <person name="Palmer S."/>
            <person name="Gehring I."/>
            <person name="Berger A."/>
            <person name="Dooley C.M."/>
            <person name="Ersan-Urun Z."/>
            <person name="Eser C."/>
            <person name="Geiger H."/>
            <person name="Geisler M."/>
            <person name="Karotki L."/>
            <person name="Kirn A."/>
            <person name="Konantz J."/>
            <person name="Konantz M."/>
            <person name="Oberlander M."/>
            <person name="Rudolph-Geiger S."/>
            <person name="Teucke M."/>
            <person name="Lanz C."/>
            <person name="Raddatz G."/>
            <person name="Osoegawa K."/>
            <person name="Zhu B."/>
            <person name="Rapp A."/>
            <person name="Widaa S."/>
            <person name="Langford C."/>
            <person name="Yang F."/>
            <person name="Schuster S.C."/>
            <person name="Carter N.P."/>
            <person name="Harrow J."/>
            <person name="Ning Z."/>
            <person name="Herrero J."/>
            <person name="Searle S.M."/>
            <person name="Enright A."/>
            <person name="Geisler R."/>
            <person name="Plasterk R.H."/>
            <person name="Lee C."/>
            <person name="Westerfield M."/>
            <person name="de Jong P.J."/>
            <person name="Zon L.I."/>
            <person name="Postlethwait J.H."/>
            <person name="Nusslein-Volhard C."/>
            <person name="Hubbard T.J."/>
            <person name="Roest Crollius H."/>
            <person name="Rogers J."/>
            <person name="Stemple D.L."/>
        </authorList>
    </citation>
    <scope>NUCLEOTIDE SEQUENCE [LARGE SCALE GENOMIC DNA]</scope>
    <source>
        <strain>Tuebingen</strain>
    </source>
</reference>
<reference key="2">
    <citation type="submission" date="2008-11" db="EMBL/GenBank/DDBJ databases">
        <authorList>
            <consortium name="NIH - Zebrafish Gene Collection (ZGC) project"/>
        </authorList>
    </citation>
    <scope>NUCLEOTIDE SEQUENCE [LARGE SCALE MRNA]</scope>
</reference>
<reference key="3">
    <citation type="journal article" date="2015" name="Curr. Biol.">
        <title>Cyp27c1 Red-Shifts the Spectral Sensitivity of Photoreceptors by Converting Vitamin A1 into A2.</title>
        <authorList>
            <person name="Enright J.M."/>
            <person name="Toomey M.B."/>
            <person name="Sato S.Y."/>
            <person name="Temple S.E."/>
            <person name="Allen J.R."/>
            <person name="Fujiwara R."/>
            <person name="Kramlinger V.M."/>
            <person name="Nagy L.D."/>
            <person name="Johnson K.M."/>
            <person name="Xiao Y."/>
            <person name="How M.J."/>
            <person name="Johnson S.L."/>
            <person name="Roberts N.W."/>
            <person name="Kefalov V.J."/>
            <person name="Guengerich F.P."/>
            <person name="Corbo J.C."/>
        </authorList>
    </citation>
    <scope>FUNCTION</scope>
    <scope>CATALYTIC ACTIVITY</scope>
    <scope>BIOPHYSICOCHEMICAL PROPERTIES</scope>
    <scope>INDUCTION BY L-THYROXINE</scope>
    <scope>TISSUE SPECIFICITY</scope>
    <scope>DISRUPTION PHENOTYPE</scope>
</reference>
<organism>
    <name type="scientific">Danio rerio</name>
    <name type="common">Zebrafish</name>
    <name type="synonym">Brachydanio rerio</name>
    <dbReference type="NCBI Taxonomy" id="7955"/>
    <lineage>
        <taxon>Eukaryota</taxon>
        <taxon>Metazoa</taxon>
        <taxon>Chordata</taxon>
        <taxon>Craniata</taxon>
        <taxon>Vertebrata</taxon>
        <taxon>Euteleostomi</taxon>
        <taxon>Actinopterygii</taxon>
        <taxon>Neopterygii</taxon>
        <taxon>Teleostei</taxon>
        <taxon>Ostariophysi</taxon>
        <taxon>Cypriniformes</taxon>
        <taxon>Danionidae</taxon>
        <taxon>Danioninae</taxon>
        <taxon>Danio</taxon>
    </lineage>
</organism>
<comment type="function">
    <text evidence="3">Efficiently catalyzes the conversion of all-trans retinol (also called vitamin A1, the precursor of 11-cis retinal) to 3,4-didehydroretinol (also called vitamin A2, the precursor of 11-cis 3,4-didehydroretinal). Also acts on all-trans retinal and all-trans retinoic acid. The replacement of 11-cis retinal chromophore in photopigments with 11-cis 3,4-didehydroretinal enhances sensitivity to long-wavelength light. This may improve vision in fresh water which is often turbid.</text>
</comment>
<comment type="catalytic activity">
    <reaction evidence="3">
        <text>all-trans-retinol + 2 reduced [adrenodoxin] + O2 + 2 H(+) = all-trans-3,4-didehydroretinol + 2 oxidized [adrenodoxin] + 2 H2O</text>
        <dbReference type="Rhea" id="RHEA:50292"/>
        <dbReference type="Rhea" id="RHEA-COMP:9998"/>
        <dbReference type="Rhea" id="RHEA-COMP:9999"/>
        <dbReference type="ChEBI" id="CHEBI:15377"/>
        <dbReference type="ChEBI" id="CHEBI:15378"/>
        <dbReference type="ChEBI" id="CHEBI:15379"/>
        <dbReference type="ChEBI" id="CHEBI:17336"/>
        <dbReference type="ChEBI" id="CHEBI:33737"/>
        <dbReference type="ChEBI" id="CHEBI:33738"/>
        <dbReference type="ChEBI" id="CHEBI:132246"/>
        <dbReference type="EC" id="1.14.19.53"/>
    </reaction>
</comment>
<comment type="cofactor">
    <cofactor evidence="1">
        <name>heme</name>
        <dbReference type="ChEBI" id="CHEBI:30413"/>
    </cofactor>
</comment>
<comment type="biophysicochemical properties">
    <kinetics>
        <KM evidence="3">2 uM for all-trans retinol</KM>
        <KM evidence="3">0.48 uM for retinal</KM>
        <KM evidence="3">0.34 uM for retinoic acid</KM>
    </kinetics>
</comment>
<comment type="subcellular location">
    <subcellularLocation>
        <location evidence="4">Membrane</location>
    </subcellularLocation>
</comment>
<comment type="tissue specificity">
    <text evidence="3">Following L-thyroxine, expressed in the retinal pigment epithelium (at protein level).</text>
</comment>
<comment type="induction">
    <text evidence="3">In the retinal pigment epithelium, up-regulated by L-thyroxine (at protein level).</text>
</comment>
<comment type="disruption phenotype">
    <text evidence="3">Mutant fish survive to adulthood without overt developmental abnormalities. Upon treatment with L-thyroxine, the mutant fish eyes fail to produce any vitamin A2 and their photoreceptors fail to undergo a red-shift in sensitivity.</text>
</comment>
<comment type="similarity">
    <text evidence="4">Belongs to the cytochrome P450 family.</text>
</comment>
<comment type="sequence caution" evidence="4">
    <conflict type="erroneous initiation">
        <sequence resource="EMBL-CDS" id="AAI54633"/>
    </conflict>
    <text>Truncated N-terminus.</text>
</comment>
<comment type="sequence caution" evidence="4">
    <conflict type="erroneous initiation">
        <sequence resource="EMBL-CDS" id="AAI71576"/>
    </conflict>
    <text>Truncated N-terminus.</text>
</comment>
<comment type="sequence caution" evidence="4">
    <conflict type="erroneous initiation">
        <sequence resource="EMBL-CDS" id="AAI71578"/>
    </conflict>
    <text>Truncated N-terminus.</text>
</comment>
<comment type="online information" name="Protein Spotlight">
    <link uri="https://www.proteinspotlight.org/back_issues/192/"/>
    <text>Seeing through the murk - Issue 192 of June 2017</text>
</comment>
<name>C27C1_DANRE</name>